<protein>
    <recommendedName>
        <fullName>Protopine 6-monooxygenase</fullName>
        <ecNumber evidence="2">1.14.14.98</ecNumber>
    </recommendedName>
    <alternativeName>
        <fullName>Protopine 6-hydroxylase</fullName>
        <shortName>P6H</shortName>
    </alternativeName>
</protein>
<feature type="chain" id="PRO_0000430259" description="Protopine 6-monooxygenase">
    <location>
        <begin position="1"/>
        <end position="541"/>
    </location>
</feature>
<feature type="transmembrane region" description="Helical" evidence="3">
    <location>
        <begin position="9"/>
        <end position="29"/>
    </location>
</feature>
<feature type="binding site" description="axial binding residue" evidence="1">
    <location>
        <position position="476"/>
    </location>
    <ligand>
        <name>heme</name>
        <dbReference type="ChEBI" id="CHEBI:30413"/>
    </ligand>
    <ligandPart>
        <name>Fe</name>
        <dbReference type="ChEBI" id="CHEBI:18248"/>
    </ligandPart>
</feature>
<name>P6H_PAPSO</name>
<proteinExistence type="evidence at transcript level"/>
<dbReference type="EC" id="1.14.14.98" evidence="2"/>
<dbReference type="EMBL" id="KC154002">
    <property type="protein sequence ID" value="AGC92397.1"/>
    <property type="molecule type" value="mRNA"/>
</dbReference>
<dbReference type="SMR" id="L7X0L7"/>
<dbReference type="KEGG" id="ag:AGC92397"/>
<dbReference type="BRENDA" id="1.14.13.55">
    <property type="organism ID" value="4515"/>
</dbReference>
<dbReference type="BRENDA" id="1.14.14.98">
    <property type="organism ID" value="4515"/>
</dbReference>
<dbReference type="GO" id="GO:0005789">
    <property type="term" value="C:endoplasmic reticulum membrane"/>
    <property type="evidence" value="ECO:0007669"/>
    <property type="project" value="UniProtKB-SubCell"/>
</dbReference>
<dbReference type="GO" id="GO:0020037">
    <property type="term" value="F:heme binding"/>
    <property type="evidence" value="ECO:0007669"/>
    <property type="project" value="InterPro"/>
</dbReference>
<dbReference type="GO" id="GO:0005506">
    <property type="term" value="F:iron ion binding"/>
    <property type="evidence" value="ECO:0007669"/>
    <property type="project" value="InterPro"/>
</dbReference>
<dbReference type="GO" id="GO:0047087">
    <property type="term" value="F:protopine 6-monooxygenase activity"/>
    <property type="evidence" value="ECO:0007669"/>
    <property type="project" value="UniProtKB-EC"/>
</dbReference>
<dbReference type="GO" id="GO:0033075">
    <property type="term" value="P:isoquinoline alkaloid biosynthetic process"/>
    <property type="evidence" value="ECO:0007669"/>
    <property type="project" value="UniProtKB-ARBA"/>
</dbReference>
<dbReference type="CDD" id="cd20654">
    <property type="entry name" value="CYP82"/>
    <property type="match status" value="1"/>
</dbReference>
<dbReference type="FunFam" id="1.10.630.10:FF:000026">
    <property type="entry name" value="Cytochrome P450 82C4"/>
    <property type="match status" value="1"/>
</dbReference>
<dbReference type="Gene3D" id="1.10.630.10">
    <property type="entry name" value="Cytochrome P450"/>
    <property type="match status" value="1"/>
</dbReference>
<dbReference type="InterPro" id="IPR001128">
    <property type="entry name" value="Cyt_P450"/>
</dbReference>
<dbReference type="InterPro" id="IPR017972">
    <property type="entry name" value="Cyt_P450_CS"/>
</dbReference>
<dbReference type="InterPro" id="IPR002401">
    <property type="entry name" value="Cyt_P450_E_grp-I"/>
</dbReference>
<dbReference type="InterPro" id="IPR036396">
    <property type="entry name" value="Cyt_P450_sf"/>
</dbReference>
<dbReference type="InterPro" id="IPR050651">
    <property type="entry name" value="Plant_Cytochrome_P450_Monoox"/>
</dbReference>
<dbReference type="PANTHER" id="PTHR47947:SF26">
    <property type="entry name" value="CYTOCHROME P450"/>
    <property type="match status" value="1"/>
</dbReference>
<dbReference type="PANTHER" id="PTHR47947">
    <property type="entry name" value="CYTOCHROME P450 82C3-RELATED"/>
    <property type="match status" value="1"/>
</dbReference>
<dbReference type="Pfam" id="PF00067">
    <property type="entry name" value="p450"/>
    <property type="match status" value="1"/>
</dbReference>
<dbReference type="PRINTS" id="PR00463">
    <property type="entry name" value="EP450I"/>
</dbReference>
<dbReference type="PRINTS" id="PR00385">
    <property type="entry name" value="P450"/>
</dbReference>
<dbReference type="SUPFAM" id="SSF48264">
    <property type="entry name" value="Cytochrome P450"/>
    <property type="match status" value="1"/>
</dbReference>
<dbReference type="PROSITE" id="PS00086">
    <property type="entry name" value="CYTOCHROME_P450"/>
    <property type="match status" value="1"/>
</dbReference>
<evidence type="ECO:0000250" key="1"/>
<evidence type="ECO:0000250" key="2">
    <source>
        <dbReference type="UniProtKB" id="F2Z9C1"/>
    </source>
</evidence>
<evidence type="ECO:0000255" key="3"/>
<evidence type="ECO:0000305" key="4"/>
<reference key="1">
    <citation type="journal article" date="2013" name="Biochem. Biophys. Res. Commun.">
        <title>Isolation and characterization of a cDNA encoding (S)-cis-N-methylstylopine 14-hydroxylase from opium poppy, a key enzyme in sanguinarine biosynthesis.</title>
        <authorList>
            <person name="Beaudoin G.A.W."/>
            <person name="Facchini P.J."/>
        </authorList>
    </citation>
    <scope>NUCLEOTIDE SEQUENCE [MRNA]</scope>
</reference>
<gene>
    <name type="primary">CYP82N3</name>
</gene>
<comment type="function">
    <text evidence="2">Catalyzes the conversion of protopine and allocryptopine to dihydrosanguinarine and dihydrochelerythrine, respectively, in the biosynthesis of isoquinoline alkaloid sanguinarine.</text>
</comment>
<comment type="catalytic activity">
    <reaction evidence="2">
        <text>protopine + reduced [NADPH--hemoprotein reductase] + O2 = 6-hydroxyprotopine + oxidized [NADPH--hemoprotein reductase] + H2O + H(+)</text>
        <dbReference type="Rhea" id="RHEA:22644"/>
        <dbReference type="Rhea" id="RHEA-COMP:11964"/>
        <dbReference type="Rhea" id="RHEA-COMP:11965"/>
        <dbReference type="ChEBI" id="CHEBI:15377"/>
        <dbReference type="ChEBI" id="CHEBI:15378"/>
        <dbReference type="ChEBI" id="CHEBI:15379"/>
        <dbReference type="ChEBI" id="CHEBI:16415"/>
        <dbReference type="ChEBI" id="CHEBI:17104"/>
        <dbReference type="ChEBI" id="CHEBI:57618"/>
        <dbReference type="ChEBI" id="CHEBI:58210"/>
        <dbReference type="EC" id="1.14.14.98"/>
    </reaction>
</comment>
<comment type="cofactor">
    <cofactor evidence="1">
        <name>heme</name>
        <dbReference type="ChEBI" id="CHEBI:30413"/>
    </cofactor>
</comment>
<comment type="pathway">
    <text>Alkaloid biosynthesis.</text>
</comment>
<comment type="subcellular location">
    <subcellularLocation>
        <location evidence="4">Endoplasmic reticulum membrane</location>
        <topology evidence="4">Single-pass membrane protein</topology>
    </subcellularLocation>
</comment>
<comment type="similarity">
    <text evidence="4">Belongs to the cytochrome P450 family.</text>
</comment>
<keyword id="KW-0256">Endoplasmic reticulum</keyword>
<keyword id="KW-0349">Heme</keyword>
<keyword id="KW-0408">Iron</keyword>
<keyword id="KW-0472">Membrane</keyword>
<keyword id="KW-0479">Metal-binding</keyword>
<keyword id="KW-0503">Monooxygenase</keyword>
<keyword id="KW-0560">Oxidoreductase</keyword>
<keyword id="KW-0812">Transmembrane</keyword>
<keyword id="KW-1133">Transmembrane helix</keyword>
<accession>L7X0L7</accession>
<organism>
    <name type="scientific">Papaver somniferum</name>
    <name type="common">Opium poppy</name>
    <dbReference type="NCBI Taxonomy" id="3469"/>
    <lineage>
        <taxon>Eukaryota</taxon>
        <taxon>Viridiplantae</taxon>
        <taxon>Streptophyta</taxon>
        <taxon>Embryophyta</taxon>
        <taxon>Tracheophyta</taxon>
        <taxon>Spermatophyta</taxon>
        <taxon>Magnoliopsida</taxon>
        <taxon>Ranunculales</taxon>
        <taxon>Papaveraceae</taxon>
        <taxon>Papaveroideae</taxon>
        <taxon>Papaver</taxon>
    </lineage>
</organism>
<sequence length="541" mass="61438">MDFSSLLLLLLNTWISAYSMAALLALVLVYNLRMTKSSSSKTTSLKGKKIITRPPAVTGAWPVFGHLHLFGSGEHPHEMLSKLAEKYGPSFTMKFGKHTTLVVSDTRVVKECFTTNDTLFSNRPSTIAFDLMTYATDSIAFTPYSPYWRELRKISTLKLLSNNRLESIKQLRTSEVSVCFKELYDLTNKKNDNGAPVPIDLKRWFDEVSNNVIMRVIFGKQNFGSKIVLGEDQEAVHYKKIMDELSRLSSLTMLSDMVPLLGWLDYFKGDLRAMKRNGKELNSILQKWLEEHKSKKSSDARQDFMDVMLSISKDTQLYGHDQDTFIKATCLAMIMGGTNSTEVALTWILSLLMNNRCALHKAREEIDLLVGKDRQVEDSDVKNLTYMNAIIKETMRLYPLGFLLERDTKEDCEVSGFNIKGGTRLLINVWKLQRDPNVWTDPMEFKPERFLTENADIDVGGQHFELLPFGAGRRVCPGVSFALQFMHLVLARLIHGYDMETLNGEDVDLSVSSGGHVNIKSTPLELILTPRLHPELYDCET</sequence>